<proteinExistence type="inferred from homology"/>
<dbReference type="EMBL" id="AF133103">
    <property type="protein sequence ID" value="AAD45664.1"/>
    <property type="molecule type" value="Genomic_DNA"/>
</dbReference>
<dbReference type="SMR" id="Q9UW82"/>
<dbReference type="GO" id="GO:0005778">
    <property type="term" value="C:peroxisomal membrane"/>
    <property type="evidence" value="ECO:0007669"/>
    <property type="project" value="UniProtKB-SubCell"/>
</dbReference>
<dbReference type="GO" id="GO:0007031">
    <property type="term" value="P:peroxisome organization"/>
    <property type="evidence" value="ECO:0007669"/>
    <property type="project" value="UniProtKB-KW"/>
</dbReference>
<dbReference type="Gene3D" id="3.40.50.11730">
    <property type="entry name" value="Peroxisome assembly protein 22"/>
    <property type="match status" value="1"/>
</dbReference>
<dbReference type="InterPro" id="IPR024359">
    <property type="entry name" value="Peroxin-22"/>
</dbReference>
<dbReference type="InterPro" id="IPR038613">
    <property type="entry name" value="Peroxin-22_C_sf"/>
</dbReference>
<dbReference type="Pfam" id="PF12827">
    <property type="entry name" value="Peroxin-22"/>
    <property type="match status" value="1"/>
</dbReference>
<accession>Q9UW82</accession>
<name>PEX22_PICPA</name>
<keyword id="KW-0472">Membrane</keyword>
<keyword id="KW-0576">Peroxisome</keyword>
<keyword id="KW-0962">Peroxisome biogenesis</keyword>
<keyword id="KW-0812">Transmembrane</keyword>
<keyword id="KW-1133">Transmembrane helix</keyword>
<evidence type="ECO:0000255" key="1"/>
<evidence type="ECO:0000305" key="2"/>
<reference key="1">
    <citation type="journal article" date="1999" name="J. Cell Biol.">
        <title>Pex22p of Pichia pastoris, essential for peroxisomal matrix protein import, anchors the ubiquitin-conjugating enzyme, Pex4p, on the peroxisomal membrane.</title>
        <authorList>
            <person name="Koller A."/>
            <person name="Snyder W.B."/>
            <person name="Faber K.N."/>
            <person name="Wenzel T.J."/>
            <person name="Rangell L."/>
            <person name="Keller G.A."/>
            <person name="Subramani S."/>
        </authorList>
    </citation>
    <scope>NUCLEOTIDE SEQUENCE [GENOMIC DNA]</scope>
</reference>
<comment type="function">
    <text>Involved in peroxisome biogenesis.</text>
</comment>
<comment type="subunit">
    <text>Interacts with PEX4.</text>
</comment>
<comment type="subcellular location">
    <subcellularLocation>
        <location>Peroxisome membrane</location>
        <topology>Single-pass membrane protein</topology>
    </subcellularLocation>
</comment>
<comment type="similarity">
    <text evidence="2">Belongs to the peroxin-22 family.</text>
</comment>
<protein>
    <recommendedName>
        <fullName>Peroxisome assembly protein 22</fullName>
    </recommendedName>
    <alternativeName>
        <fullName>Peroxin-22</fullName>
    </alternativeName>
</protein>
<sequence>MKSTKRNTFFGLAALGALGLGYSVYKSFITSDKPSSLINLGINQERKSYTRQKVAIIVSESILAIQLPIQEILKNTKDVVFVLAPTIAKDEFLRENEVDSGLSFKVIETGTAIGCFHVLKHIKATYNIFNLHDFLPSSTKTSSDNEQLTFDLEEYVNLHLNNFLQNVVELPSDSTSIQETVNQYIYN</sequence>
<organism>
    <name type="scientific">Komagataella pastoris</name>
    <name type="common">Yeast</name>
    <name type="synonym">Pichia pastoris</name>
    <dbReference type="NCBI Taxonomy" id="4922"/>
    <lineage>
        <taxon>Eukaryota</taxon>
        <taxon>Fungi</taxon>
        <taxon>Dikarya</taxon>
        <taxon>Ascomycota</taxon>
        <taxon>Saccharomycotina</taxon>
        <taxon>Pichiomycetes</taxon>
        <taxon>Pichiales</taxon>
        <taxon>Pichiaceae</taxon>
        <taxon>Komagataella</taxon>
    </lineage>
</organism>
<gene>
    <name type="primary">PEX22</name>
</gene>
<feature type="chain" id="PRO_0000058338" description="Peroxisome assembly protein 22">
    <location>
        <begin position="1"/>
        <end position="187"/>
    </location>
</feature>
<feature type="transmembrane region" description="Helical" evidence="1">
    <location>
        <begin position="7"/>
        <end position="29"/>
    </location>
</feature>